<feature type="chain" id="PRO_0000290874" description="Small ribosomal subunit protein uS8">
    <location>
        <begin position="1"/>
        <end position="132"/>
    </location>
</feature>
<protein>
    <recommendedName>
        <fullName evidence="1">Small ribosomal subunit protein uS8</fullName>
    </recommendedName>
    <alternativeName>
        <fullName evidence="2">30S ribosomal protein S8</fullName>
    </alternativeName>
</protein>
<comment type="function">
    <text evidence="1">One of the primary rRNA binding proteins, it binds directly to 16S rRNA central domain where it helps coordinate assembly of the platform of the 30S subunit.</text>
</comment>
<comment type="subunit">
    <text evidence="1">Part of the 30S ribosomal subunit. Contacts proteins S5 and S12.</text>
</comment>
<comment type="similarity">
    <text evidence="1">Belongs to the universal ribosomal protein uS8 family.</text>
</comment>
<sequence>MSVNDPLGDMLTRIRNAIGRKKTTVSTPASRLRARVLDVMKAEGYIRDYTQVDYDNGKSELEIQLKYLEGAPVIREIARVSKPGRRVYVSVKSIPHVANGLGIAILSTPKGVMADHEAREKNVGGEFLCQIF</sequence>
<gene>
    <name evidence="1" type="primary">rpsH</name>
    <name type="ordered locus">Meso_1664</name>
</gene>
<reference key="1">
    <citation type="submission" date="2006-06" db="EMBL/GenBank/DDBJ databases">
        <title>Complete sequence of chromosome of Mesorhizobium sp. BNC1.</title>
        <authorList>
            <consortium name="US DOE Joint Genome Institute"/>
            <person name="Copeland A."/>
            <person name="Lucas S."/>
            <person name="Lapidus A."/>
            <person name="Barry K."/>
            <person name="Detter J.C."/>
            <person name="Glavina del Rio T."/>
            <person name="Hammon N."/>
            <person name="Israni S."/>
            <person name="Dalin E."/>
            <person name="Tice H."/>
            <person name="Pitluck S."/>
            <person name="Chertkov O."/>
            <person name="Brettin T."/>
            <person name="Bruce D."/>
            <person name="Han C."/>
            <person name="Tapia R."/>
            <person name="Gilna P."/>
            <person name="Schmutz J."/>
            <person name="Larimer F."/>
            <person name="Land M."/>
            <person name="Hauser L."/>
            <person name="Kyrpides N."/>
            <person name="Mikhailova N."/>
            <person name="Richardson P."/>
        </authorList>
    </citation>
    <scope>NUCLEOTIDE SEQUENCE [LARGE SCALE GENOMIC DNA]</scope>
    <source>
        <strain>BNC1</strain>
    </source>
</reference>
<dbReference type="EMBL" id="CP000390">
    <property type="protein sequence ID" value="ABG63059.1"/>
    <property type="molecule type" value="Genomic_DNA"/>
</dbReference>
<dbReference type="SMR" id="Q11HR6"/>
<dbReference type="STRING" id="266779.Meso_1664"/>
<dbReference type="KEGG" id="mes:Meso_1664"/>
<dbReference type="eggNOG" id="COG0096">
    <property type="taxonomic scope" value="Bacteria"/>
</dbReference>
<dbReference type="HOGENOM" id="CLU_098428_0_0_5"/>
<dbReference type="OrthoDB" id="9802617at2"/>
<dbReference type="GO" id="GO:1990904">
    <property type="term" value="C:ribonucleoprotein complex"/>
    <property type="evidence" value="ECO:0007669"/>
    <property type="project" value="UniProtKB-KW"/>
</dbReference>
<dbReference type="GO" id="GO:0005840">
    <property type="term" value="C:ribosome"/>
    <property type="evidence" value="ECO:0007669"/>
    <property type="project" value="UniProtKB-KW"/>
</dbReference>
<dbReference type="GO" id="GO:0019843">
    <property type="term" value="F:rRNA binding"/>
    <property type="evidence" value="ECO:0007669"/>
    <property type="project" value="UniProtKB-UniRule"/>
</dbReference>
<dbReference type="GO" id="GO:0003735">
    <property type="term" value="F:structural constituent of ribosome"/>
    <property type="evidence" value="ECO:0007669"/>
    <property type="project" value="InterPro"/>
</dbReference>
<dbReference type="GO" id="GO:0006412">
    <property type="term" value="P:translation"/>
    <property type="evidence" value="ECO:0007669"/>
    <property type="project" value="UniProtKB-UniRule"/>
</dbReference>
<dbReference type="FunFam" id="3.30.1370.30:FF:000002">
    <property type="entry name" value="30S ribosomal protein S8"/>
    <property type="match status" value="1"/>
</dbReference>
<dbReference type="FunFam" id="3.30.1490.10:FF:000001">
    <property type="entry name" value="30S ribosomal protein S8"/>
    <property type="match status" value="1"/>
</dbReference>
<dbReference type="Gene3D" id="3.30.1370.30">
    <property type="match status" value="1"/>
</dbReference>
<dbReference type="Gene3D" id="3.30.1490.10">
    <property type="match status" value="1"/>
</dbReference>
<dbReference type="HAMAP" id="MF_01302_B">
    <property type="entry name" value="Ribosomal_uS8_B"/>
    <property type="match status" value="1"/>
</dbReference>
<dbReference type="InterPro" id="IPR000630">
    <property type="entry name" value="Ribosomal_uS8"/>
</dbReference>
<dbReference type="InterPro" id="IPR047863">
    <property type="entry name" value="Ribosomal_uS8_CS"/>
</dbReference>
<dbReference type="InterPro" id="IPR035987">
    <property type="entry name" value="Ribosomal_uS8_sf"/>
</dbReference>
<dbReference type="NCBIfam" id="NF001109">
    <property type="entry name" value="PRK00136.1"/>
    <property type="match status" value="1"/>
</dbReference>
<dbReference type="PANTHER" id="PTHR11758">
    <property type="entry name" value="40S RIBOSOMAL PROTEIN S15A"/>
    <property type="match status" value="1"/>
</dbReference>
<dbReference type="Pfam" id="PF00410">
    <property type="entry name" value="Ribosomal_S8"/>
    <property type="match status" value="1"/>
</dbReference>
<dbReference type="SUPFAM" id="SSF56047">
    <property type="entry name" value="Ribosomal protein S8"/>
    <property type="match status" value="1"/>
</dbReference>
<dbReference type="PROSITE" id="PS00053">
    <property type="entry name" value="RIBOSOMAL_S8"/>
    <property type="match status" value="1"/>
</dbReference>
<accession>Q11HR6</accession>
<keyword id="KW-0687">Ribonucleoprotein</keyword>
<keyword id="KW-0689">Ribosomal protein</keyword>
<keyword id="KW-0694">RNA-binding</keyword>
<keyword id="KW-0699">rRNA-binding</keyword>
<evidence type="ECO:0000255" key="1">
    <source>
        <dbReference type="HAMAP-Rule" id="MF_01302"/>
    </source>
</evidence>
<evidence type="ECO:0000305" key="2"/>
<organism>
    <name type="scientific">Chelativorans sp. (strain BNC1)</name>
    <dbReference type="NCBI Taxonomy" id="266779"/>
    <lineage>
        <taxon>Bacteria</taxon>
        <taxon>Pseudomonadati</taxon>
        <taxon>Pseudomonadota</taxon>
        <taxon>Alphaproteobacteria</taxon>
        <taxon>Hyphomicrobiales</taxon>
        <taxon>Phyllobacteriaceae</taxon>
        <taxon>Chelativorans</taxon>
    </lineage>
</organism>
<name>RS8_CHESB</name>
<proteinExistence type="inferred from homology"/>